<feature type="chain" id="PRO_0000100332" description="Major cold shock protein">
    <location>
        <begin position="1" status="less than"/>
        <end position="45" status="greater than"/>
    </location>
</feature>
<feature type="domain" description="CSD">
    <location>
        <begin position="1" status="less than"/>
        <end position="45" status="greater than"/>
    </location>
</feature>
<feature type="non-terminal residue">
    <location>
        <position position="1"/>
    </location>
</feature>
<feature type="non-terminal residue">
    <location>
        <position position="45"/>
    </location>
</feature>
<keyword id="KW-0010">Activator</keyword>
<keyword id="KW-0963">Cytoplasm</keyword>
<keyword id="KW-0238">DNA-binding</keyword>
<keyword id="KW-0346">Stress response</keyword>
<keyword id="KW-0804">Transcription</keyword>
<keyword id="KW-0805">Transcription regulation</keyword>
<reference key="1">
    <citation type="journal article" date="1997" name="J. Ind. Microbiol. Biotechnol.">
        <title>Detection and speciation of bacteria through PCR using universal major cold-shock protein primer oligomers.</title>
        <authorList>
            <person name="Francis K.P."/>
            <person name="Stewart G.S.A.B."/>
        </authorList>
    </citation>
    <scope>NUCLEOTIDE SEQUENCE [GENOMIC DNA]</scope>
    <source>
        <strain>NCTC 4335</strain>
    </source>
</reference>
<gene>
    <name type="primary">cspA</name>
</gene>
<organism>
    <name type="scientific">Streptococcus dysgalactiae</name>
    <dbReference type="NCBI Taxonomy" id="1334"/>
    <lineage>
        <taxon>Bacteria</taxon>
        <taxon>Bacillati</taxon>
        <taxon>Bacillota</taxon>
        <taxon>Bacilli</taxon>
        <taxon>Lactobacillales</taxon>
        <taxon>Streptococcaceae</taxon>
        <taxon>Streptococcus</taxon>
    </lineage>
</organism>
<proteinExistence type="inferred from homology"/>
<dbReference type="EMBL" id="U60053">
    <property type="protein sequence ID" value="AAC80257.1"/>
    <property type="molecule type" value="Genomic_DNA"/>
</dbReference>
<dbReference type="SMR" id="Q53984"/>
<dbReference type="GO" id="GO:0005737">
    <property type="term" value="C:cytoplasm"/>
    <property type="evidence" value="ECO:0007669"/>
    <property type="project" value="UniProtKB-SubCell"/>
</dbReference>
<dbReference type="GO" id="GO:0003677">
    <property type="term" value="F:DNA binding"/>
    <property type="evidence" value="ECO:0007669"/>
    <property type="project" value="UniProtKB-KW"/>
</dbReference>
<dbReference type="CDD" id="cd04458">
    <property type="entry name" value="CSP_CDS"/>
    <property type="match status" value="1"/>
</dbReference>
<dbReference type="Gene3D" id="2.40.50.140">
    <property type="entry name" value="Nucleic acid-binding proteins"/>
    <property type="match status" value="1"/>
</dbReference>
<dbReference type="InterPro" id="IPR012156">
    <property type="entry name" value="Cold_shock_CspA"/>
</dbReference>
<dbReference type="InterPro" id="IPR011129">
    <property type="entry name" value="CSD"/>
</dbReference>
<dbReference type="InterPro" id="IPR019844">
    <property type="entry name" value="CSD_CS"/>
</dbReference>
<dbReference type="InterPro" id="IPR002059">
    <property type="entry name" value="CSP_DNA-bd"/>
</dbReference>
<dbReference type="InterPro" id="IPR012340">
    <property type="entry name" value="NA-bd_OB-fold"/>
</dbReference>
<dbReference type="PANTHER" id="PTHR46565">
    <property type="entry name" value="COLD SHOCK DOMAIN PROTEIN 2"/>
    <property type="match status" value="1"/>
</dbReference>
<dbReference type="PANTHER" id="PTHR46565:SF20">
    <property type="entry name" value="COLD SHOCK DOMAIN-CONTAINING PROTEIN 4"/>
    <property type="match status" value="1"/>
</dbReference>
<dbReference type="Pfam" id="PF00313">
    <property type="entry name" value="CSD"/>
    <property type="match status" value="1"/>
</dbReference>
<dbReference type="PIRSF" id="PIRSF002599">
    <property type="entry name" value="Cold_shock_A"/>
    <property type="match status" value="1"/>
</dbReference>
<dbReference type="PRINTS" id="PR00050">
    <property type="entry name" value="COLDSHOCK"/>
</dbReference>
<dbReference type="SMART" id="SM00357">
    <property type="entry name" value="CSP"/>
    <property type="match status" value="1"/>
</dbReference>
<dbReference type="SUPFAM" id="SSF50249">
    <property type="entry name" value="Nucleic acid-binding proteins"/>
    <property type="match status" value="1"/>
</dbReference>
<dbReference type="PROSITE" id="PS00352">
    <property type="entry name" value="CSD_1"/>
    <property type="match status" value="1"/>
</dbReference>
<dbReference type="PROSITE" id="PS51857">
    <property type="entry name" value="CSD_2"/>
    <property type="match status" value="1"/>
</dbReference>
<accession>Q53984</accession>
<protein>
    <recommendedName>
        <fullName>Major cold shock protein</fullName>
    </recommendedName>
</protein>
<comment type="subunit">
    <text evidence="1">Homodimer.</text>
</comment>
<comment type="subcellular location">
    <subcellularLocation>
        <location evidence="1">Cytoplasm</location>
    </subcellularLocation>
</comment>
<comment type="induction">
    <text evidence="1">In response to low temperature.</text>
</comment>
<evidence type="ECO:0000250" key="1"/>
<name>CSPA_STRDY</name>
<sequence length="45" mass="5052">EKGFGFISTENGQDVFAHFSAIQTNGFKTLEEGQKVEFDVEEGQR</sequence>